<name>ADPRH_STAAM</name>
<accession>P67343</accession>
<accession>Q99WQ1</accession>
<keyword id="KW-0002">3D-structure</keyword>
<keyword id="KW-0326">Glycosidase</keyword>
<keyword id="KW-0378">Hydrolase</keyword>
<keyword id="KW-0479">Metal-binding</keyword>
<keyword id="KW-0862">Zinc</keyword>
<sequence length="266" mass="30110">METLKSNKARLEYLINDMRRERNDNDVLVMPSSFEDLWELYRGLANVRPALPVSDEYLAVQDAMLSDLNHQHVTDLKDLKPIKGDNIFVWQGDITTLKIDAIVNAANSRFLGCMQANHDCIDNIIHTKAGVQVRLDCAEIIRQQGRNEGVGKAKKTRGYNLPAKYIIHTVGPQIRRLPVSKMNQDLLAKCYLSCLKLADQHSLNHVAFCCISTGVFAFPQDEAAEIAVRTVESYLKETNSTLKVVFNVFTDKDLQLYKEALNRDAE</sequence>
<protein>
    <recommendedName>
        <fullName evidence="8">Protein-ADP-ribose hydrolase</fullName>
        <ecNumber evidence="3 5">3.2.1.-</ecNumber>
    </recommendedName>
    <alternativeName>
        <fullName evidence="6">SauMacro</fullName>
    </alternativeName>
    <alternativeName>
        <fullName evidence="7">Sirtuin-linked macrodomain protein SAV0325</fullName>
    </alternativeName>
</protein>
<gene>
    <name evidence="10" type="ordered locus">SAV0325</name>
</gene>
<reference key="1">
    <citation type="journal article" date="2001" name="Lancet">
        <title>Whole genome sequencing of meticillin-resistant Staphylococcus aureus.</title>
        <authorList>
            <person name="Kuroda M."/>
            <person name="Ohta T."/>
            <person name="Uchiyama I."/>
            <person name="Baba T."/>
            <person name="Yuzawa H."/>
            <person name="Kobayashi I."/>
            <person name="Cui L."/>
            <person name="Oguchi A."/>
            <person name="Aoki K."/>
            <person name="Nagai Y."/>
            <person name="Lian J.-Q."/>
            <person name="Ito T."/>
            <person name="Kanamori M."/>
            <person name="Matsumaru H."/>
            <person name="Maruyama A."/>
            <person name="Murakami H."/>
            <person name="Hosoyama A."/>
            <person name="Mizutani-Ui Y."/>
            <person name="Takahashi N.K."/>
            <person name="Sawano T."/>
            <person name="Inoue R."/>
            <person name="Kaito C."/>
            <person name="Sekimizu K."/>
            <person name="Hirakawa H."/>
            <person name="Kuhara S."/>
            <person name="Goto S."/>
            <person name="Yabuzaki J."/>
            <person name="Kanehisa M."/>
            <person name="Yamashita A."/>
            <person name="Oshima K."/>
            <person name="Furuya K."/>
            <person name="Yoshino C."/>
            <person name="Shiba T."/>
            <person name="Hattori M."/>
            <person name="Ogasawara N."/>
            <person name="Hayashi H."/>
            <person name="Hiramatsu K."/>
        </authorList>
    </citation>
    <scope>NUCLEOTIDE SEQUENCE [LARGE SCALE GENOMIC DNA]</scope>
    <source>
        <strain>Mu50 / ATCC 700699</strain>
    </source>
</reference>
<reference key="2">
    <citation type="journal article" date="2015" name="Mol. Cell">
        <title>Identification of a class of protein ADP-ribosylating sirtuins in microbial pathogens.</title>
        <authorList>
            <person name="Rack J.G."/>
            <person name="Morra R."/>
            <person name="Barkauskaite E."/>
            <person name="Kraehenbuehl R."/>
            <person name="Ariza A."/>
            <person name="Qu Y."/>
            <person name="Ortmayer M."/>
            <person name="Leidecker O."/>
            <person name="Cameron D.R."/>
            <person name="Matic I."/>
            <person name="Peleg A.Y."/>
            <person name="Leys D."/>
            <person name="Traven A."/>
            <person name="Ahel I."/>
        </authorList>
    </citation>
    <scope>FUNCTION</scope>
    <scope>CATALYTIC ACTIVITY</scope>
    <source>
        <strain>Mu50 / ATCC 700699</strain>
    </source>
</reference>
<reference evidence="11" key="3">
    <citation type="journal article" date="2016" name="Protein Sci.">
        <title>Structure of the sirtuin-linked macrodomain SAV0325 from Staphylococcus aureus.</title>
        <authorList>
            <person name="Appel C.D."/>
            <person name="Feld G.K."/>
            <person name="Wallace B.D."/>
            <person name="Williams R.S."/>
        </authorList>
    </citation>
    <scope>X-RAY CRYSTALLOGRAPHY (1.75 ANGSTROMS) IN COMPLEX WITH ZN(2+)</scope>
    <scope>COFACTOR</scope>
    <scope>SUBUNIT</scope>
    <scope>DOMAIN</scope>
</reference>
<reference evidence="12" key="4">
    <citation type="journal article" date="2024" name="J. Biol. Chem.">
        <title>Evolutionary and molecular basis of ADP-ribosylation reversal by zinc-dependent macrodomains.</title>
        <authorList>
            <person name="Ariza A."/>
            <person name="Liu Q."/>
            <person name="Cowieson N.P."/>
            <person name="Ahel I."/>
            <person name="Filippov D.V."/>
            <person name="Rack J.G.M."/>
        </authorList>
    </citation>
    <scope>X-RAY CRYSTALLOGRAPHY (1.94 ANGSTROMS) IN COMPLEX WITH ZN(2+)</scope>
    <scope>FUNCTION</scope>
    <scope>CATALYTIC ACTIVITY</scope>
    <scope>COFACTOR</scope>
    <scope>SUBUNIT</scope>
    <scope>INTERACTION WITH GCVH-L</scope>
    <scope>MUTAGENESIS OF 1-MET--HIS-70; ASN-46; ASP-93; CYS-113; HIS-118; CYS-120; ASN-123; GLY-214 AND PHE-249</scope>
</reference>
<organism>
    <name type="scientific">Staphylococcus aureus (strain Mu50 / ATCC 700699)</name>
    <dbReference type="NCBI Taxonomy" id="158878"/>
    <lineage>
        <taxon>Bacteria</taxon>
        <taxon>Bacillati</taxon>
        <taxon>Bacillota</taxon>
        <taxon>Bacilli</taxon>
        <taxon>Bacillales</taxon>
        <taxon>Staphylococcaceae</taxon>
        <taxon>Staphylococcus</taxon>
    </lineage>
</organism>
<dbReference type="EC" id="3.2.1.-" evidence="3 5"/>
<dbReference type="EMBL" id="BA000017">
    <property type="protein sequence ID" value="BAB56487.1"/>
    <property type="molecule type" value="Genomic_DNA"/>
</dbReference>
<dbReference type="RefSeq" id="WP_000449069.1">
    <property type="nucleotide sequence ID" value="NC_002758.2"/>
</dbReference>
<dbReference type="PDB" id="5KIV">
    <property type="method" value="X-ray"/>
    <property type="resolution" value="1.75 A"/>
    <property type="chains" value="A=1-266"/>
</dbReference>
<dbReference type="PDB" id="8RSL">
    <property type="method" value="X-ray"/>
    <property type="resolution" value="1.94 A"/>
    <property type="chains" value="A/B=1-266"/>
</dbReference>
<dbReference type="PDBsum" id="5KIV"/>
<dbReference type="PDBsum" id="8RSL"/>
<dbReference type="SMR" id="P67343"/>
<dbReference type="KEGG" id="sav:SAV0325"/>
<dbReference type="HOGENOM" id="CLU_046550_2_1_9"/>
<dbReference type="PhylomeDB" id="P67343"/>
<dbReference type="Proteomes" id="UP000002481">
    <property type="component" value="Chromosome"/>
</dbReference>
<dbReference type="GO" id="GO:0004553">
    <property type="term" value="F:hydrolase activity, hydrolyzing O-glycosyl compounds"/>
    <property type="evidence" value="ECO:0000314"/>
    <property type="project" value="UniProtKB"/>
</dbReference>
<dbReference type="GO" id="GO:0051725">
    <property type="term" value="P:protein de-ADP-ribosylation"/>
    <property type="evidence" value="ECO:0000314"/>
    <property type="project" value="UniProtKB"/>
</dbReference>
<dbReference type="CDD" id="cd02908">
    <property type="entry name" value="Macro_OAADPr_deacetylase"/>
    <property type="match status" value="1"/>
</dbReference>
<dbReference type="FunFam" id="3.40.220.10:FF:000018">
    <property type="entry name" value="Protein-ADP-ribose hydrolase"/>
    <property type="match status" value="1"/>
</dbReference>
<dbReference type="Gene3D" id="3.40.220.10">
    <property type="entry name" value="Leucine Aminopeptidase, subunit E, domain 1"/>
    <property type="match status" value="1"/>
</dbReference>
<dbReference type="InterPro" id="IPR002589">
    <property type="entry name" value="Macro_dom"/>
</dbReference>
<dbReference type="InterPro" id="IPR043472">
    <property type="entry name" value="Macro_dom-like"/>
</dbReference>
<dbReference type="NCBIfam" id="NF003163">
    <property type="entry name" value="PRK04143.1"/>
    <property type="match status" value="1"/>
</dbReference>
<dbReference type="PANTHER" id="PTHR11106">
    <property type="entry name" value="GANGLIOSIDE INDUCED DIFFERENTIATION ASSOCIATED PROTEIN 2-RELATED"/>
    <property type="match status" value="1"/>
</dbReference>
<dbReference type="PANTHER" id="PTHR11106:SF27">
    <property type="entry name" value="MACRO DOMAIN-CONTAINING PROTEIN"/>
    <property type="match status" value="1"/>
</dbReference>
<dbReference type="Pfam" id="PF01661">
    <property type="entry name" value="Macro"/>
    <property type="match status" value="1"/>
</dbReference>
<dbReference type="SMART" id="SM00506">
    <property type="entry name" value="A1pp"/>
    <property type="match status" value="1"/>
</dbReference>
<dbReference type="SUPFAM" id="SSF52949">
    <property type="entry name" value="Macro domain-like"/>
    <property type="match status" value="1"/>
</dbReference>
<dbReference type="PROSITE" id="PS51154">
    <property type="entry name" value="MACRO"/>
    <property type="match status" value="1"/>
</dbReference>
<proteinExistence type="evidence at protein level"/>
<feature type="chain" id="PRO_0000089209" description="Protein-ADP-ribose hydrolase">
    <location>
        <begin position="1"/>
        <end position="266"/>
    </location>
</feature>
<feature type="domain" description="Macro" evidence="2">
    <location>
        <begin position="74"/>
        <end position="265"/>
    </location>
</feature>
<feature type="binding site" evidence="1">
    <location>
        <position position="93"/>
    </location>
    <ligand>
        <name>ADP-D-ribose</name>
        <dbReference type="ChEBI" id="CHEBI:57967"/>
    </ligand>
</feature>
<feature type="binding site" evidence="1">
    <location>
        <position position="94"/>
    </location>
    <ligand>
        <name>ADP-D-ribose</name>
        <dbReference type="ChEBI" id="CHEBI:57967"/>
    </ligand>
</feature>
<feature type="binding site" evidence="1">
    <location>
        <position position="107"/>
    </location>
    <ligand>
        <name>ADP-D-ribose</name>
        <dbReference type="ChEBI" id="CHEBI:57967"/>
    </ligand>
</feature>
<feature type="binding site" evidence="4 5 11 12">
    <location>
        <position position="113"/>
    </location>
    <ligand>
        <name>Zn(2+)</name>
        <dbReference type="ChEBI" id="CHEBI:29105"/>
    </ligand>
</feature>
<feature type="binding site" evidence="4 5 11 12">
    <location>
        <position position="118"/>
    </location>
    <ligand>
        <name>Zn(2+)</name>
        <dbReference type="ChEBI" id="CHEBI:29105"/>
    </ligand>
</feature>
<feature type="binding site" evidence="1">
    <location>
        <position position="120"/>
    </location>
    <ligand>
        <name>ADP-D-ribose</name>
        <dbReference type="ChEBI" id="CHEBI:57967"/>
    </ligand>
</feature>
<feature type="binding site" evidence="4 5 11 12">
    <location>
        <position position="120"/>
    </location>
    <ligand>
        <name>Zn(2+)</name>
        <dbReference type="ChEBI" id="CHEBI:29105"/>
    </ligand>
</feature>
<feature type="binding site" evidence="1">
    <location>
        <position position="121"/>
    </location>
    <ligand>
        <name>ADP-D-ribose</name>
        <dbReference type="ChEBI" id="CHEBI:57967"/>
    </ligand>
</feature>
<feature type="binding site" evidence="1">
    <location>
        <position position="122"/>
    </location>
    <ligand>
        <name>ADP-D-ribose</name>
        <dbReference type="ChEBI" id="CHEBI:57967"/>
    </ligand>
</feature>
<feature type="binding site" evidence="1">
    <location>
        <position position="212"/>
    </location>
    <ligand>
        <name>ADP-D-ribose</name>
        <dbReference type="ChEBI" id="CHEBI:57967"/>
    </ligand>
</feature>
<feature type="binding site" evidence="1">
    <location>
        <position position="213"/>
    </location>
    <ligand>
        <name>ADP-D-ribose</name>
        <dbReference type="ChEBI" id="CHEBI:57967"/>
    </ligand>
</feature>
<feature type="binding site" evidence="1">
    <location>
        <position position="214"/>
    </location>
    <ligand>
        <name>ADP-D-ribose</name>
        <dbReference type="ChEBI" id="CHEBI:57967"/>
    </ligand>
</feature>
<feature type="binding site" evidence="1">
    <location>
        <position position="216"/>
    </location>
    <ligand>
        <name>ADP-D-ribose</name>
        <dbReference type="ChEBI" id="CHEBI:57967"/>
    </ligand>
</feature>
<feature type="mutagenesis site" description="Loss of hydrolase activity with GcvH-L as substrate. Loss of zinc binding." evidence="5">
    <location>
        <begin position="1"/>
        <end position="70"/>
    </location>
</feature>
<feature type="mutagenesis site" description="Decreases hydrolase activity with GcvH-L as substrate. Does not affect zinc binding." evidence="5">
    <original>N</original>
    <variation>I</variation>
    <location>
        <position position="46"/>
    </location>
</feature>
<feature type="mutagenesis site" description="No effect on hydrolase activity with GcvH-L as substrate. Does not affect zinc binding." evidence="5">
    <original>D</original>
    <variation>R</variation>
    <location>
        <position position="93"/>
    </location>
</feature>
<feature type="mutagenesis site" description="Loss of hydrolase activity with GcvH-L as substrate. Loss of zinc binding." evidence="5">
    <original>C</original>
    <variation>A</variation>
    <location>
        <position position="113"/>
    </location>
</feature>
<feature type="mutagenesis site" description="Loss of hydrolase activity with GcvH-L as substrate. Loss of zinc binding." evidence="5">
    <original>H</original>
    <variation>Y</variation>
    <location>
        <position position="118"/>
    </location>
</feature>
<feature type="mutagenesis site" description="Loss of hydrolase activity with GcvH-L as substrate. Loss of zinc binding." evidence="5">
    <original>C</original>
    <variation>T</variation>
    <location>
        <position position="120"/>
    </location>
</feature>
<feature type="mutagenesis site" description="Loss of hydrolase activity with GcvH-L as substrate. Does not affect zinc binding." evidence="5">
    <original>N</original>
    <variation>T</variation>
    <location>
        <position position="123"/>
    </location>
</feature>
<feature type="mutagenesis site" description="Decreases hydrolase activity with GcvH-L as substrate. Does not affect zinc binding." evidence="5">
    <original>G</original>
    <variation>E</variation>
    <location>
        <position position="214"/>
    </location>
</feature>
<feature type="mutagenesis site" description="Loss of hydrolase activity with GcvH-L as substrate. Does not affect zinc binding." evidence="5">
    <original>F</original>
    <variation>L</variation>
    <location>
        <position position="249"/>
    </location>
</feature>
<comment type="function">
    <text evidence="3 5">ADP-ribosylhydrolase that specifically reverses the SirTM-mediated mono-ADP-ribosylation at an asparatate residue of GcvH-L (SAV0324), by releasing ADP-ribose from the target protein (PubMed:26166706, PubMed:39270823). May play a role in the regulation of the response to host-induced oxidative stress (PubMed:26166706).</text>
</comment>
<comment type="catalytic activity">
    <reaction evidence="3 5">
        <text>4-O-(ADP-D-ribosyl)-L-aspartyl-[protein] + H2O = L-aspartyl-[protein] + ADP-D-ribose + H(+)</text>
        <dbReference type="Rhea" id="RHEA:54428"/>
        <dbReference type="Rhea" id="RHEA-COMP:9867"/>
        <dbReference type="Rhea" id="RHEA-COMP:13832"/>
        <dbReference type="ChEBI" id="CHEBI:15377"/>
        <dbReference type="ChEBI" id="CHEBI:15378"/>
        <dbReference type="ChEBI" id="CHEBI:29961"/>
        <dbReference type="ChEBI" id="CHEBI:57967"/>
        <dbReference type="ChEBI" id="CHEBI:138102"/>
    </reaction>
    <physiologicalReaction direction="left-to-right" evidence="3">
        <dbReference type="Rhea" id="RHEA:54429"/>
    </physiologicalReaction>
</comment>
<comment type="cofactor">
    <cofactor evidence="4 5">
        <name>Zn(2+)</name>
        <dbReference type="ChEBI" id="CHEBI:29105"/>
    </cofactor>
    <text evidence="4 5">Binds 1 Zn(2+) ion per subunit.</text>
</comment>
<comment type="subunit">
    <text evidence="4 5">Monomer (PubMed:27345688, PubMed:39270823). Directly interacts with the lipoylated form of GcvH-L (PubMed:39270823).</text>
</comment>
<comment type="domain">
    <text evidence="4">Contains an N-terminal three-helix bundle motif with the Zn(2+) binding site.</text>
</comment>
<comment type="similarity">
    <text evidence="9">Belongs to the MacroD-type family. Zn-Macro subfamily.</text>
</comment>
<evidence type="ECO:0000250" key="1">
    <source>
        <dbReference type="UniProtKB" id="P0DN70"/>
    </source>
</evidence>
<evidence type="ECO:0000255" key="2">
    <source>
        <dbReference type="PROSITE-ProRule" id="PRU00490"/>
    </source>
</evidence>
<evidence type="ECO:0000269" key="3">
    <source>
    </source>
</evidence>
<evidence type="ECO:0000269" key="4">
    <source>
    </source>
</evidence>
<evidence type="ECO:0000269" key="5">
    <source>
    </source>
</evidence>
<evidence type="ECO:0000303" key="6">
    <source>
    </source>
</evidence>
<evidence type="ECO:0000303" key="7">
    <source>
    </source>
</evidence>
<evidence type="ECO:0000305" key="8">
    <source>
    </source>
</evidence>
<evidence type="ECO:0000305" key="9">
    <source>
    </source>
</evidence>
<evidence type="ECO:0000312" key="10">
    <source>
        <dbReference type="EMBL" id="BAB56487.1"/>
    </source>
</evidence>
<evidence type="ECO:0007744" key="11">
    <source>
        <dbReference type="PDB" id="5KIV"/>
    </source>
</evidence>
<evidence type="ECO:0007744" key="12">
    <source>
        <dbReference type="PDB" id="8RSL"/>
    </source>
</evidence>